<gene>
    <name evidence="4 6" type="primary">Rbm10</name>
</gene>
<proteinExistence type="evidence at transcript level"/>
<keyword id="KW-0024">Alternative initiation</keyword>
<keyword id="KW-0025">Alternative splicing</keyword>
<keyword id="KW-0539">Nucleus</keyword>
<keyword id="KW-1185">Reference proteome</keyword>
<evidence type="ECO:0000250" key="1">
    <source>
        <dbReference type="UniProtKB" id="P0DW28"/>
    </source>
</evidence>
<evidence type="ECO:0000256" key="2">
    <source>
        <dbReference type="SAM" id="MobiDB-lite"/>
    </source>
</evidence>
<evidence type="ECO:0000269" key="3">
    <source>
    </source>
</evidence>
<evidence type="ECO:0000303" key="4">
    <source>
    </source>
</evidence>
<evidence type="ECO:0000305" key="5"/>
<evidence type="ECO:0000312" key="6">
    <source>
        <dbReference type="MGI" id="MGI:2384310"/>
    </source>
</evidence>
<protein>
    <recommendedName>
        <fullName evidence="5">Ribosome biogenesis inhibitor MINAS-60</fullName>
        <shortName evidence="4">MINAS-60</shortName>
    </recommendedName>
</protein>
<accession>P0DW27</accession>
<comment type="function">
    <text evidence="1">Acts as a late-stage inhibitor of pre-60S ribosome assembly by preventing pre-60S ribosome export from nucleus.</text>
</comment>
<comment type="subunit">
    <text evidence="1">Interacts with 60S ribosome assembly factors GTPBP4 and MRTO4.</text>
</comment>
<comment type="subcellular location">
    <subcellularLocation>
        <location evidence="1">Nucleus</location>
        <location evidence="1">Nucleolus</location>
    </subcellularLocation>
</comment>
<comment type="alternative products">
    <event type="alternative splicing"/>
    <event type="alternative initiation"/>
    <isoform>
        <id>P0DW27-1</id>
        <name>Ribosome biogenesis inhibitor MINAS-60</name>
        <sequence type="displayed"/>
    </isoform>
    <isoform>
        <id>Q99KG3-1</id>
        <name>1</name>
        <sequence type="external"/>
    </isoform>
    <isoform>
        <id>Q99KG3-2</id>
        <name>2</name>
        <sequence type="external"/>
    </isoform>
    <isoform>
        <id>Q99KG3-3</id>
        <name>3</name>
        <sequence type="external"/>
    </isoform>
</comment>
<comment type="miscellaneous">
    <text evidence="3">MINAS-60 is the product of an alternative open reading frame (alt-ORF) of transcripts coding for the RBM10 (AC Q99KG3) protein (PubMed:35393574). MINAS-60 and RBM10 ORFs are overlapping and are formed by shifting the reading frame (PubMed:35393574).</text>
</comment>
<feature type="chain" id="PRO_0000456282" description="Ribosome biogenesis inhibitor MINAS-60">
    <location>
        <begin position="1"/>
        <end position="130"/>
    </location>
</feature>
<feature type="region of interest" description="Disordered" evidence="2">
    <location>
        <begin position="61"/>
        <end position="130"/>
    </location>
</feature>
<feature type="compositionally biased region" description="Basic residues" evidence="2">
    <location>
        <begin position="109"/>
        <end position="130"/>
    </location>
</feature>
<name>MNS60_MOUSE</name>
<sequence length="130" mass="14391">MKDEVVVVTGLAAMEPLIVHRMIVERTAAGTMIIETWTTAHTHESMAVRRASMSMTTHLKSKVQRIPTRPPRAPRLSVGGGGGTGTVPLARQASPETATIGTRTIGPSKGRRRRRRMRRRRRRRPVTSSC</sequence>
<reference key="1">
    <citation type="journal article" date="2009" name="PLoS Biol.">
        <title>Lineage-specific biology revealed by a finished genome assembly of the mouse.</title>
        <authorList>
            <person name="Church D.M."/>
            <person name="Goodstadt L."/>
            <person name="Hillier L.W."/>
            <person name="Zody M.C."/>
            <person name="Goldstein S."/>
            <person name="She X."/>
            <person name="Bult C.J."/>
            <person name="Agarwala R."/>
            <person name="Cherry J.L."/>
            <person name="DiCuccio M."/>
            <person name="Hlavina W."/>
            <person name="Kapustin Y."/>
            <person name="Meric P."/>
            <person name="Maglott D."/>
            <person name="Birtle Z."/>
            <person name="Marques A.C."/>
            <person name="Graves T."/>
            <person name="Zhou S."/>
            <person name="Teague B."/>
            <person name="Potamousis K."/>
            <person name="Churas C."/>
            <person name="Place M."/>
            <person name="Herschleb J."/>
            <person name="Runnheim R."/>
            <person name="Forrest D."/>
            <person name="Amos-Landgraf J."/>
            <person name="Schwartz D.C."/>
            <person name="Cheng Z."/>
            <person name="Lindblad-Toh K."/>
            <person name="Eichler E.E."/>
            <person name="Ponting C.P."/>
        </authorList>
    </citation>
    <scope>NUCLEOTIDE SEQUENCE [LARGE SCALE GENOMIC DNA]</scope>
    <source>
        <strain>C57BL/6J</strain>
    </source>
</reference>
<reference key="2">
    <citation type="journal article" date="2004" name="Genome Res.">
        <title>The status, quality, and expansion of the NIH full-length cDNA project: the Mammalian Gene Collection (MGC).</title>
        <authorList>
            <consortium name="The MGC Project Team"/>
        </authorList>
    </citation>
    <scope>NUCLEOTIDE SEQUENCE [LARGE SCALE MRNA]</scope>
    <source>
        <strain>FVB/N</strain>
        <tissue>Mammary tumor</tissue>
    </source>
</reference>
<reference key="3">
    <citation type="journal article" date="2022" name="Nat. Chem. Biol.">
        <title>Nascent alt-protein chemoproteomics reveals a pre-60S assembly checkpoint inhibitor.</title>
        <authorList>
            <person name="Cao X."/>
            <person name="Khitun A."/>
            <person name="Harold C.M."/>
            <person name="Bryant C.J."/>
            <person name="Zheng S.J."/>
            <person name="Baserga S.J."/>
            <person name="Slavoff S.A."/>
        </authorList>
    </citation>
    <scope>IDENTIFICATION</scope>
</reference>
<organism>
    <name type="scientific">Mus musculus</name>
    <name type="common">Mouse</name>
    <dbReference type="NCBI Taxonomy" id="10090"/>
    <lineage>
        <taxon>Eukaryota</taxon>
        <taxon>Metazoa</taxon>
        <taxon>Chordata</taxon>
        <taxon>Craniata</taxon>
        <taxon>Vertebrata</taxon>
        <taxon>Euteleostomi</taxon>
        <taxon>Mammalia</taxon>
        <taxon>Eutheria</taxon>
        <taxon>Euarchontoglires</taxon>
        <taxon>Glires</taxon>
        <taxon>Rodentia</taxon>
        <taxon>Myomorpha</taxon>
        <taxon>Muroidea</taxon>
        <taxon>Muridae</taxon>
        <taxon>Murinae</taxon>
        <taxon>Mus</taxon>
        <taxon>Mus</taxon>
    </lineage>
</organism>
<dbReference type="EMBL" id="AL672073">
    <property type="status" value="NOT_ANNOTATED_CDS"/>
    <property type="molecule type" value="Genomic_DNA"/>
</dbReference>
<dbReference type="EMBL" id="BC004674">
    <property type="status" value="NOT_ANNOTATED_CDS"/>
    <property type="molecule type" value="mRNA"/>
</dbReference>
<dbReference type="AGR" id="MGI:2384310"/>
<dbReference type="MGI" id="MGI:2384310">
    <property type="gene designation" value="Rbm10"/>
</dbReference>
<dbReference type="Proteomes" id="UP000000589">
    <property type="component" value="Chromosome X"/>
</dbReference>
<dbReference type="GO" id="GO:0005730">
    <property type="term" value="C:nucleolus"/>
    <property type="evidence" value="ECO:0000250"/>
    <property type="project" value="UniProtKB"/>
</dbReference>
<dbReference type="GO" id="GO:0070935">
    <property type="term" value="P:3'-UTR-mediated mRNA stabilization"/>
    <property type="evidence" value="ECO:0000314"/>
    <property type="project" value="MGI"/>
</dbReference>
<dbReference type="GO" id="GO:0008285">
    <property type="term" value="P:negative regulation of cell population proliferation"/>
    <property type="evidence" value="ECO:0000314"/>
    <property type="project" value="MGI"/>
</dbReference>
<dbReference type="GO" id="GO:0048025">
    <property type="term" value="P:negative regulation of mRNA splicing, via spliceosome"/>
    <property type="evidence" value="ECO:0000315"/>
    <property type="project" value="MGI"/>
</dbReference>
<dbReference type="GO" id="GO:2000204">
    <property type="term" value="P:negative regulation of ribosomal large subunit export from nucleus"/>
    <property type="evidence" value="ECO:0000250"/>
    <property type="project" value="UniProtKB"/>
</dbReference>
<dbReference type="GO" id="GO:0000122">
    <property type="term" value="P:negative regulation of transcription by RNA polymerase II"/>
    <property type="evidence" value="ECO:0000314"/>
    <property type="project" value="MGI"/>
</dbReference>
<dbReference type="GO" id="GO:1904706">
    <property type="term" value="P:negative regulation of vascular associated smooth muscle cell proliferation"/>
    <property type="evidence" value="ECO:0000316"/>
    <property type="project" value="MGI"/>
</dbReference>
<dbReference type="GO" id="GO:1905461">
    <property type="term" value="P:positive regulation of vascular associated smooth muscle cell apoptotic process"/>
    <property type="evidence" value="ECO:0000314"/>
    <property type="project" value="MGI"/>
</dbReference>
<dbReference type="GO" id="GO:1905459">
    <property type="term" value="P:regulation of vascular associated smooth muscle cell apoptotic process"/>
    <property type="evidence" value="ECO:0000316"/>
    <property type="project" value="MGI"/>
</dbReference>
<dbReference type="GO" id="GO:1905288">
    <property type="term" value="P:vascular associated smooth muscle cell apoptotic process"/>
    <property type="evidence" value="ECO:0000314"/>
    <property type="project" value="MGI"/>
</dbReference>
<dbReference type="GO" id="GO:1990874">
    <property type="term" value="P:vascular associated smooth muscle cell proliferation"/>
    <property type="evidence" value="ECO:0000316"/>
    <property type="project" value="MGI"/>
</dbReference>